<feature type="chain" id="PRO_0000267256" description="Nucleoside triphosphate pyrophosphatase/Nudix hydrolase fusion protein">
    <location>
        <begin position="1"/>
        <end position="482"/>
    </location>
</feature>
<feature type="domain" description="Nudix hydrolase">
    <location>
        <begin position="338"/>
        <end position="475"/>
    </location>
</feature>
<feature type="region of interest" description="Maf-like">
    <location>
        <begin position="1"/>
        <end position="299"/>
    </location>
</feature>
<feature type="active site" description="Proton acceptor" evidence="2">
    <location>
        <position position="167"/>
    </location>
</feature>
<comment type="function">
    <text evidence="2">Nucleoside triphosphate pyrophosphatase. May have a dual role in cell division arrest and in preventing the incorporation of modified nucleotides into cellular nucleic acids.</text>
</comment>
<comment type="catalytic activity">
    <reaction evidence="2">
        <text>a ribonucleoside 5'-triphosphate + H2O = a ribonucleoside 5'-phosphate + diphosphate + H(+)</text>
        <dbReference type="Rhea" id="RHEA:23996"/>
        <dbReference type="ChEBI" id="CHEBI:15377"/>
        <dbReference type="ChEBI" id="CHEBI:15378"/>
        <dbReference type="ChEBI" id="CHEBI:33019"/>
        <dbReference type="ChEBI" id="CHEBI:58043"/>
        <dbReference type="ChEBI" id="CHEBI:61557"/>
        <dbReference type="EC" id="3.6.1.9"/>
    </reaction>
</comment>
<comment type="catalytic activity">
    <reaction evidence="2">
        <text>a 2'-deoxyribonucleoside 5'-triphosphate + H2O = a 2'-deoxyribonucleoside 5'-phosphate + diphosphate + H(+)</text>
        <dbReference type="Rhea" id="RHEA:44644"/>
        <dbReference type="ChEBI" id="CHEBI:15377"/>
        <dbReference type="ChEBI" id="CHEBI:15378"/>
        <dbReference type="ChEBI" id="CHEBI:33019"/>
        <dbReference type="ChEBI" id="CHEBI:61560"/>
        <dbReference type="ChEBI" id="CHEBI:65317"/>
        <dbReference type="EC" id="3.6.1.9"/>
    </reaction>
</comment>
<comment type="cofactor">
    <cofactor evidence="2">
        <name>a divalent metal cation</name>
        <dbReference type="ChEBI" id="CHEBI:60240"/>
    </cofactor>
</comment>
<comment type="subcellular location">
    <subcellularLocation>
        <location evidence="2 3">Cytoplasm</location>
    </subcellularLocation>
</comment>
<comment type="similarity">
    <text evidence="3">In the N-terminal section; belongs to the Maf family.</text>
</comment>
<name>NTPNH_BIFLO</name>
<protein>
    <recommendedName>
        <fullName>Nucleoside triphosphate pyrophosphatase/Nudix hydrolase fusion protein</fullName>
    </recommendedName>
    <domain>
        <recommendedName>
            <fullName evidence="3">Nucleoside triphosphate pyrophosphatase</fullName>
            <ecNumber evidence="1">3.6.1.9</ecNumber>
        </recommendedName>
        <alternativeName>
            <fullName evidence="3">Nucleotide pyrophosphatase</fullName>
            <shortName evidence="3">Nucleotide PPase</shortName>
        </alternativeName>
    </domain>
    <domain>
        <recommendedName>
            <fullName evidence="3">Nudix hydrolase</fullName>
        </recommendedName>
    </domain>
</protein>
<sequence>MSIPLILASKSKPRRDVLYSAGICPTIRVSHVDEPAALEAAAREEGVTVDDLSIKQRVMILAVAKAEAVHRAYRDVADTAAAATGDRVIAYPLKAKEIKDSEREAAVEDLREAAAGKPIDYSKAEIATTRDFSGIDMPTVTEPIATAIAGQPGLTEATVGPLILGCDSMFLLGGECYGKPHSEAVASERLKRMSGATGELWTGHCLIDFATGRTVRGASHAKVHFGEFTDADVERYIATGEPLEVAGSFTLEGFGGAFIDSIEGDPHGIIGLSLPLARHLAGELGITWTDLWNVGRGELEPESKASGNQHAGILPPVENVHQPGDGWVDCACGRKHWGTNGASGILLARRDPVSGKVTHVVMQHRAAWSAEGGTWGIPGGATADGESPIEGALRESYEEANITPEDIEVVGSYREDHGPWAYTTVFAFEKPGHTVEPKANDDESMEICWVPIDDVPNRKLLTAMKTDWPRFAARLDELATAQ</sequence>
<evidence type="ECO:0000250" key="1">
    <source>
        <dbReference type="UniProtKB" id="P25536"/>
    </source>
</evidence>
<evidence type="ECO:0000255" key="2">
    <source>
        <dbReference type="HAMAP-Rule" id="MF_00528"/>
    </source>
</evidence>
<evidence type="ECO:0000305" key="3"/>
<organism>
    <name type="scientific">Bifidobacterium longum (strain NCC 2705)</name>
    <dbReference type="NCBI Taxonomy" id="206672"/>
    <lineage>
        <taxon>Bacteria</taxon>
        <taxon>Bacillati</taxon>
        <taxon>Actinomycetota</taxon>
        <taxon>Actinomycetes</taxon>
        <taxon>Bifidobacteriales</taxon>
        <taxon>Bifidobacteriaceae</taxon>
        <taxon>Bifidobacterium</taxon>
    </lineage>
</organism>
<accession>Q8G4U8</accession>
<reference key="1">
    <citation type="journal article" date="2002" name="Proc. Natl. Acad. Sci. U.S.A.">
        <title>The genome sequence of Bifidobacterium longum reflects its adaptation to the human gastrointestinal tract.</title>
        <authorList>
            <person name="Schell M.A."/>
            <person name="Karmirantzou M."/>
            <person name="Snel B."/>
            <person name="Vilanova D."/>
            <person name="Berger B."/>
            <person name="Pessi G."/>
            <person name="Zwahlen M.-C."/>
            <person name="Desiere F."/>
            <person name="Bork P."/>
            <person name="Delley M."/>
            <person name="Pridmore R.D."/>
            <person name="Arigoni F."/>
        </authorList>
    </citation>
    <scope>NUCLEOTIDE SEQUENCE [LARGE SCALE GENOMIC DNA]</scope>
    <source>
        <strain>NCC 2705</strain>
    </source>
</reference>
<dbReference type="EC" id="3.6.1.9" evidence="1"/>
<dbReference type="EMBL" id="AE014295">
    <property type="protein sequence ID" value="AAN25077.1"/>
    <property type="molecule type" value="Genomic_DNA"/>
</dbReference>
<dbReference type="RefSeq" id="NP_696441.1">
    <property type="nucleotide sequence ID" value="NC_004307.2"/>
</dbReference>
<dbReference type="RefSeq" id="WP_011068714.1">
    <property type="nucleotide sequence ID" value="NC_004307.2"/>
</dbReference>
<dbReference type="SMR" id="Q8G4U8"/>
<dbReference type="STRING" id="206672.BL1276"/>
<dbReference type="EnsemblBacteria" id="AAN25077">
    <property type="protein sequence ID" value="AAN25077"/>
    <property type="gene ID" value="BL1276"/>
</dbReference>
<dbReference type="KEGG" id="blo:BL1276"/>
<dbReference type="PATRIC" id="fig|206672.9.peg.1563"/>
<dbReference type="HOGENOM" id="CLU_040416_1_2_11"/>
<dbReference type="OrthoDB" id="3527985at2"/>
<dbReference type="Proteomes" id="UP000000439">
    <property type="component" value="Chromosome"/>
</dbReference>
<dbReference type="GO" id="GO:0005737">
    <property type="term" value="C:cytoplasm"/>
    <property type="evidence" value="ECO:0007669"/>
    <property type="project" value="UniProtKB-SubCell"/>
</dbReference>
<dbReference type="GO" id="GO:0047429">
    <property type="term" value="F:nucleoside triphosphate diphosphatase activity"/>
    <property type="evidence" value="ECO:0007669"/>
    <property type="project" value="UniProtKB-EC"/>
</dbReference>
<dbReference type="GO" id="GO:0009117">
    <property type="term" value="P:nucleotide metabolic process"/>
    <property type="evidence" value="ECO:0007669"/>
    <property type="project" value="UniProtKB-KW"/>
</dbReference>
<dbReference type="CDD" id="cd00555">
    <property type="entry name" value="Maf"/>
    <property type="match status" value="1"/>
</dbReference>
<dbReference type="Gene3D" id="3.90.950.10">
    <property type="match status" value="1"/>
</dbReference>
<dbReference type="Gene3D" id="3.90.79.10">
    <property type="entry name" value="Nucleoside Triphosphate Pyrophosphohydrolase"/>
    <property type="match status" value="1"/>
</dbReference>
<dbReference type="HAMAP" id="MF_00528">
    <property type="entry name" value="Maf"/>
    <property type="match status" value="1"/>
</dbReference>
<dbReference type="InterPro" id="IPR029001">
    <property type="entry name" value="ITPase-like_fam"/>
</dbReference>
<dbReference type="InterPro" id="IPR003697">
    <property type="entry name" value="Maf-like"/>
</dbReference>
<dbReference type="InterPro" id="IPR015797">
    <property type="entry name" value="NUDIX_hydrolase-like_dom_sf"/>
</dbReference>
<dbReference type="InterPro" id="IPR020084">
    <property type="entry name" value="NUDIX_hydrolase_CS"/>
</dbReference>
<dbReference type="InterPro" id="IPR000086">
    <property type="entry name" value="NUDIX_hydrolase_dom"/>
</dbReference>
<dbReference type="PANTHER" id="PTHR43213">
    <property type="entry name" value="BIFUNCTIONAL DTTP/UTP PYROPHOSPHATASE/METHYLTRANSFERASE PROTEIN-RELATED"/>
    <property type="match status" value="1"/>
</dbReference>
<dbReference type="PANTHER" id="PTHR43213:SF5">
    <property type="entry name" value="BIFUNCTIONAL DTTP_UTP PYROPHOSPHATASE_METHYLTRANSFERASE PROTEIN-RELATED"/>
    <property type="match status" value="1"/>
</dbReference>
<dbReference type="Pfam" id="PF02545">
    <property type="entry name" value="Maf"/>
    <property type="match status" value="1"/>
</dbReference>
<dbReference type="Pfam" id="PF00293">
    <property type="entry name" value="NUDIX"/>
    <property type="match status" value="1"/>
</dbReference>
<dbReference type="SUPFAM" id="SSF52972">
    <property type="entry name" value="ITPase-like"/>
    <property type="match status" value="2"/>
</dbReference>
<dbReference type="SUPFAM" id="SSF55811">
    <property type="entry name" value="Nudix"/>
    <property type="match status" value="1"/>
</dbReference>
<dbReference type="PROSITE" id="PS51462">
    <property type="entry name" value="NUDIX"/>
    <property type="match status" value="1"/>
</dbReference>
<dbReference type="PROSITE" id="PS00893">
    <property type="entry name" value="NUDIX_BOX"/>
    <property type="match status" value="1"/>
</dbReference>
<gene>
    <name type="ordered locus">BL1276</name>
</gene>
<keyword id="KW-0963">Cytoplasm</keyword>
<keyword id="KW-0378">Hydrolase</keyword>
<keyword id="KW-0546">Nucleotide metabolism</keyword>
<keyword id="KW-1185">Reference proteome</keyword>
<proteinExistence type="inferred from homology"/>